<organismHost>
    <name type="scientific">Aves</name>
    <dbReference type="NCBI Taxonomy" id="8782"/>
</organismHost>
<organismHost>
    <name type="scientific">Felis catus</name>
    <name type="common">Cat</name>
    <name type="synonym">Felis silvestris catus</name>
    <dbReference type="NCBI Taxonomy" id="9685"/>
</organismHost>
<organismHost>
    <name type="scientific">Homo sapiens</name>
    <name type="common">Human</name>
    <dbReference type="NCBI Taxonomy" id="9606"/>
</organismHost>
<organismHost>
    <name type="scientific">Panthera pardus</name>
    <name type="common">Leopard</name>
    <name type="synonym">Felis pardus</name>
    <dbReference type="NCBI Taxonomy" id="9691"/>
</organismHost>
<organismHost>
    <name type="scientific">Panthera tigris</name>
    <name type="common">Tiger</name>
    <dbReference type="NCBI Taxonomy" id="9694"/>
</organismHost>
<organismHost>
    <name type="scientific">Sus scrofa</name>
    <name type="common">Pig</name>
    <dbReference type="NCBI Taxonomy" id="9823"/>
</organismHost>
<evidence type="ECO:0000255" key="1">
    <source>
        <dbReference type="HAMAP-Rule" id="MF_04070"/>
    </source>
</evidence>
<evidence type="ECO:0000256" key="2">
    <source>
        <dbReference type="SAM" id="MobiDB-lite"/>
    </source>
</evidence>
<keyword id="KW-0167">Capsid protein</keyword>
<keyword id="KW-1139">Helical capsid protein</keyword>
<keyword id="KW-1048">Host nucleus</keyword>
<keyword id="KW-0945">Host-virus interaction</keyword>
<keyword id="KW-0687">Ribonucleoprotein</keyword>
<keyword id="KW-0694">RNA-binding</keyword>
<keyword id="KW-0543">Viral nucleoprotein</keyword>
<keyword id="KW-1163">Viral penetration into host nucleus</keyword>
<keyword id="KW-0946">Virion</keyword>
<keyword id="KW-1160">Virus entry into host cell</keyword>
<protein>
    <recommendedName>
        <fullName evidence="1">Nucleoprotein</fullName>
    </recommendedName>
    <alternativeName>
        <fullName evidence="1">Nucleocapsid protein</fullName>
        <shortName evidence="1">Protein N</shortName>
    </alternativeName>
</protein>
<feature type="chain" id="PRO_0000310925" description="Nucleoprotein">
    <location>
        <begin position="1"/>
        <end position="498"/>
    </location>
</feature>
<feature type="region of interest" description="Disordered" evidence="2">
    <location>
        <begin position="1"/>
        <end position="21"/>
    </location>
</feature>
<feature type="short sequence motif" description="Unconventional nuclear localization signal" evidence="1">
    <location>
        <begin position="1"/>
        <end position="18"/>
    </location>
</feature>
<feature type="short sequence motif" description="Bipartite nuclear localization signal" evidence="1">
    <location>
        <begin position="198"/>
        <end position="216"/>
    </location>
</feature>
<organism>
    <name type="scientific">Influenza A virus (strain A/Teal/China/2978.1/2002 H5N1 genotype W)</name>
    <dbReference type="NCBI Taxonomy" id="284215"/>
    <lineage>
        <taxon>Viruses</taxon>
        <taxon>Riboviria</taxon>
        <taxon>Orthornavirae</taxon>
        <taxon>Negarnaviricota</taxon>
        <taxon>Polyploviricotina</taxon>
        <taxon>Insthoviricetes</taxon>
        <taxon>Articulavirales</taxon>
        <taxon>Orthomyxoviridae</taxon>
        <taxon>Alphainfluenzavirus</taxon>
        <taxon>Alphainfluenzavirus influenzae</taxon>
        <taxon>Influenza A virus</taxon>
    </lineage>
</organism>
<reference key="1">
    <citation type="journal article" date="2004" name="Nature">
        <title>Genesis of a highly pathogenic and potentially pandemic H5N1 influenza virus in eastern Asia.</title>
        <authorList>
            <person name="Li K.S."/>
            <person name="Guan Y."/>
            <person name="Wang J."/>
            <person name="Smith G.J.D."/>
            <person name="Xu K.M."/>
            <person name="Duan L."/>
            <person name="Rahardjo A.P."/>
            <person name="Puthavathana P."/>
            <person name="Buranathai C."/>
            <person name="Nguyen T.D."/>
            <person name="Estoepangestie A.T.S."/>
            <person name="Chaisingh A."/>
            <person name="Auewarakul P."/>
            <person name="Long H.T."/>
            <person name="Hanh N.T.H."/>
            <person name="Webby R.J."/>
            <person name="Poon L.L.M."/>
            <person name="Chen H."/>
            <person name="Shortridge K.F."/>
            <person name="Yuen K.Y."/>
            <person name="Webster R.G."/>
            <person name="Peiris J.S.M."/>
        </authorList>
    </citation>
    <scope>NUCLEOTIDE SEQUENCE [GENOMIC RNA]</scope>
</reference>
<reference key="2">
    <citation type="submission" date="2008-03" db="EMBL/GenBank/DDBJ databases">
        <authorList>
            <person name="Li K.S."/>
            <person name="Guan Y."/>
            <person name="Wang J."/>
            <person name="Smith G.J.D."/>
            <person name="Xu K.M."/>
            <person name="Duan L."/>
            <person name="Rahardjo A.P."/>
            <person name="Puthavathana P."/>
            <person name="Buranathai C."/>
            <person name="Nguyen T.D."/>
            <person name="Estoepangestie A.T.S."/>
            <person name="Chaisingh A."/>
            <person name="Auewarakul P."/>
            <person name="Long H.T."/>
            <person name="Hanh N.T.H."/>
            <person name="Lim W."/>
            <person name="Webby R.J."/>
            <person name="Poon L.L.M."/>
            <person name="Chen H."/>
            <person name="Shortridge K.F."/>
            <person name="Yuen K.Y."/>
            <person name="Webster R.G."/>
            <person name="Peiris J.S.M."/>
        </authorList>
    </citation>
    <scope>SEQUENCE REVISION</scope>
</reference>
<sequence>MASQGTKRSYEQMETGGERQNATEIRASVGRMVGGIGRFYIQMCTELKLSDYEGRLIQNSITIERMVLSAFDERRNKYLEEHPSAGKDPKKTGGPIYRRRDGKWMRELILYDKEEIRRIWRQANNGEDATAGLTHLMIWHSNLNDSTYQRTRALVRTGMDPRMCSLMQGSTLPRRSGAAGAAVKGVGTMVMELIRMIKRGINDRNFWRGENGRRTRIAYERMCNILKGKFQTAAQRAMMDQVRESRNPGNAEIEDLIFLARSALILRGSVAHKSCLPACVYGLAVASGYDFEREGYSLVGIDPFRLLQNSQVFSLIRPNENPAHKSQLVWMACHSAAFEDLRVSSFIRGTRIVPRGQLSTRGVQIASNENMETMDSSTLELRSRYWAIRTRSGGNTNQQRASAGQISVQPTFSVQRNLPFERATIMAAFTGNTEGRTSDMRTEIIRMMESARPEDVSFQGRGVFELSDEKATNPIVPSFDMSNEGSYFFGDNAEEYEN</sequence>
<proteinExistence type="inferred from homology"/>
<comment type="function">
    <text evidence="1">Encapsidates the negative strand viral RNA, protecting it from nucleases. The encapsidated genomic RNA is termed the ribonucleoprotein (RNP) and serves as template for transcription and replication. The RNP needs to be localized in the host nucleus to start an infectious cycle, but is too large to diffuse through the nuclear pore complex. NP comprises at least 2 nuclear localization signals that are responsible for the active RNP import into the nucleus through cellular importin alpha/beta pathway. Later in the infection, nclear export of RNPs are mediated through viral proteins NEP interacting with M1 which binds nucleoproteins. It is possible that nucleoprotein binds directly host exportin-1/XPO1 and plays an active role in RNPs nuclear export. M1 interaction with RNP seems to hide nucleoprotein's nuclear localization signals. Soon after a virion infects a new cell, M1 dissociates from the RNP under acidification of the virion driven by M2 protein. Dissociation of M1 from RNP unmasks nucleoprotein's nuclear localization signals, targeting the RNP to the nucleus.</text>
</comment>
<comment type="subunit">
    <text evidence="1">Homomultimerizes to form the nucleocapsid. May bind host exportin-1/XPO1. Binds to viral genomic RNA. Protein-RNA contacts are mediated by a combination of electrostatic interactions between positively charged residues and the phosphate backbone and planar interactions between aromatic side chains and bases.</text>
</comment>
<comment type="subcellular location">
    <subcellularLocation>
        <location evidence="1">Virion</location>
    </subcellularLocation>
    <subcellularLocation>
        <location evidence="1">Host nucleus</location>
    </subcellularLocation>
</comment>
<comment type="PTM">
    <text evidence="1">Late in virus-infected cells, may be cleaved from a 56-kDa protein to a 53-kDa protein by a cellular caspase. This cleavage might be a marker for the onset of apoptosis in infected cells or have a specific function in virus host interaction.</text>
</comment>
<comment type="similarity">
    <text evidence="1">Belongs to the influenza viruses nucleoprotein family.</text>
</comment>
<dbReference type="EMBL" id="AY651527">
    <property type="protein sequence ID" value="AAT70658.2"/>
    <property type="molecule type" value="Genomic_RNA"/>
</dbReference>
<dbReference type="SMR" id="Q6DPD2"/>
<dbReference type="GO" id="GO:0019029">
    <property type="term" value="C:helical viral capsid"/>
    <property type="evidence" value="ECO:0007669"/>
    <property type="project" value="UniProtKB-UniRule"/>
</dbReference>
<dbReference type="GO" id="GO:0043657">
    <property type="term" value="C:host cell"/>
    <property type="evidence" value="ECO:0007669"/>
    <property type="project" value="GOC"/>
</dbReference>
<dbReference type="GO" id="GO:0042025">
    <property type="term" value="C:host cell nucleus"/>
    <property type="evidence" value="ECO:0007669"/>
    <property type="project" value="UniProtKB-SubCell"/>
</dbReference>
<dbReference type="GO" id="GO:1990904">
    <property type="term" value="C:ribonucleoprotein complex"/>
    <property type="evidence" value="ECO:0007669"/>
    <property type="project" value="UniProtKB-KW"/>
</dbReference>
<dbReference type="GO" id="GO:0019013">
    <property type="term" value="C:viral nucleocapsid"/>
    <property type="evidence" value="ECO:0007669"/>
    <property type="project" value="UniProtKB-UniRule"/>
</dbReference>
<dbReference type="GO" id="GO:0003723">
    <property type="term" value="F:RNA binding"/>
    <property type="evidence" value="ECO:0007669"/>
    <property type="project" value="UniProtKB-UniRule"/>
</dbReference>
<dbReference type="GO" id="GO:0005198">
    <property type="term" value="F:structural molecule activity"/>
    <property type="evidence" value="ECO:0007669"/>
    <property type="project" value="UniProtKB-UniRule"/>
</dbReference>
<dbReference type="GO" id="GO:0046718">
    <property type="term" value="P:symbiont entry into host cell"/>
    <property type="evidence" value="ECO:0007669"/>
    <property type="project" value="UniProtKB-KW"/>
</dbReference>
<dbReference type="GO" id="GO:0075732">
    <property type="term" value="P:viral penetration into host nucleus"/>
    <property type="evidence" value="ECO:0007669"/>
    <property type="project" value="UniProtKB-UniRule"/>
</dbReference>
<dbReference type="HAMAP" id="MF_04070">
    <property type="entry name" value="INFV_NCAP"/>
    <property type="match status" value="1"/>
</dbReference>
<dbReference type="InterPro" id="IPR002141">
    <property type="entry name" value="Flu_NP"/>
</dbReference>
<dbReference type="Pfam" id="PF00506">
    <property type="entry name" value="Flu_NP"/>
    <property type="match status" value="1"/>
</dbReference>
<dbReference type="SUPFAM" id="SSF161003">
    <property type="entry name" value="flu NP-like"/>
    <property type="match status" value="1"/>
</dbReference>
<gene>
    <name evidence="1" type="primary">NP</name>
</gene>
<accession>Q6DPD2</accession>
<name>NCAP_I02A7</name>